<gene>
    <name evidence="2" type="primary">gL</name>
    <name type="ORF">BKRF2</name>
</gene>
<dbReference type="EMBL" id="AY961628">
    <property type="protein sequence ID" value="AAY41126.1"/>
    <property type="molecule type" value="Genomic_DNA"/>
</dbReference>
<dbReference type="PDB" id="7D5Z">
    <property type="method" value="X-ray"/>
    <property type="resolution" value="4.20 A"/>
    <property type="chains" value="B/F/J/N=24-135"/>
</dbReference>
<dbReference type="PDB" id="8KHR">
    <property type="method" value="EM"/>
    <property type="resolution" value="3.25 A"/>
    <property type="chains" value="B=27-133"/>
</dbReference>
<dbReference type="PDBsum" id="7D5Z"/>
<dbReference type="PDBsum" id="8KHR"/>
<dbReference type="EMDB" id="EMD-33992"/>
<dbReference type="SMR" id="Q3KSS3"/>
<dbReference type="IntAct" id="Q3KSS3">
    <property type="interactions" value="5"/>
</dbReference>
<dbReference type="MINT" id="Q3KSS3"/>
<dbReference type="Proteomes" id="UP000007641">
    <property type="component" value="Genome"/>
</dbReference>
<dbReference type="GO" id="GO:0044177">
    <property type="term" value="C:host cell Golgi apparatus"/>
    <property type="evidence" value="ECO:0007669"/>
    <property type="project" value="UniProtKB-SubCell"/>
</dbReference>
<dbReference type="GO" id="GO:0020002">
    <property type="term" value="C:host cell plasma membrane"/>
    <property type="evidence" value="ECO:0007669"/>
    <property type="project" value="UniProtKB-SubCell"/>
</dbReference>
<dbReference type="GO" id="GO:0016020">
    <property type="term" value="C:membrane"/>
    <property type="evidence" value="ECO:0007669"/>
    <property type="project" value="UniProtKB-KW"/>
</dbReference>
<dbReference type="GO" id="GO:0019031">
    <property type="term" value="C:viral envelope"/>
    <property type="evidence" value="ECO:0007669"/>
    <property type="project" value="UniProtKB-KW"/>
</dbReference>
<dbReference type="GO" id="GO:0055036">
    <property type="term" value="C:virion membrane"/>
    <property type="evidence" value="ECO:0007669"/>
    <property type="project" value="UniProtKB-SubCell"/>
</dbReference>
<dbReference type="GO" id="GO:0019064">
    <property type="term" value="P:fusion of virus membrane with host plasma membrane"/>
    <property type="evidence" value="ECO:0007669"/>
    <property type="project" value="UniProtKB-KW"/>
</dbReference>
<dbReference type="GO" id="GO:0046718">
    <property type="term" value="P:symbiont entry into host cell"/>
    <property type="evidence" value="ECO:0007669"/>
    <property type="project" value="UniProtKB-KW"/>
</dbReference>
<dbReference type="Gene3D" id="3.10.390.20">
    <property type="entry name" value="Viral glycoprotein L"/>
    <property type="match status" value="1"/>
</dbReference>
<dbReference type="HAMAP" id="MF_04034">
    <property type="entry name" value="HSV_GL_alphagamma"/>
    <property type="match status" value="1"/>
</dbReference>
<dbReference type="InterPro" id="IPR020175">
    <property type="entry name" value="Herpes_gL_rhadinovirus"/>
</dbReference>
<dbReference type="InterPro" id="IPR038313">
    <property type="entry name" value="Herpes_gL_rhadinovirus_sf"/>
</dbReference>
<dbReference type="InterPro" id="IPR034708">
    <property type="entry name" value="HSV_GL_alphagamma"/>
</dbReference>
<dbReference type="Pfam" id="PF11108">
    <property type="entry name" value="Phage_glycop_gL"/>
    <property type="match status" value="1"/>
</dbReference>
<protein>
    <recommendedName>
        <fullName evidence="2">Envelope glycoprotein L</fullName>
        <shortName evidence="2">gL</shortName>
    </recommendedName>
</protein>
<comment type="function">
    <text evidence="1 2">The heterodimer glycoprotein H-glycoprotein L is required for the fusion of viral and plasma membranes leading to virus entry into the host cell. Acts as a functional inhibitor of gH and maintains gH in an inhibited form. Upon binding to host integrins, gL dissociates from gH leading to activation of the viral fusion glycoproteins gB and gH. The heterodimer gH/gL targets also host EPHA2 to promote viral entry.</text>
</comment>
<comment type="subunit">
    <text evidence="1 2">Interacts with glycoprotein H (gH); this interaction is necessary for the correct processing and cell surface expression of gH. The heterodimer gH/gL seems to interact with gB trimers during fusion. The heterodimer gH/gL interacts with host EPHA2 to facilitate virus internalization and fusion.</text>
</comment>
<comment type="interaction">
    <interactant intactId="EBI-2621403">
        <id>Q3KSS3</id>
    </interactant>
    <interactant intactId="EBI-2621399">
        <id>A8CSJ8</id>
        <label>LMP1</label>
    </interactant>
    <organismsDiffer>false</organismsDiffer>
    <experiments>2</experiments>
</comment>
<comment type="subcellular location">
    <subcellularLocation>
        <location evidence="2">Virion membrane</location>
        <topology evidence="2">Peripheral membrane protein</topology>
        <orientation evidence="2">Extracellular side</orientation>
    </subcellularLocation>
    <subcellularLocation>
        <location evidence="2">Host cell membrane</location>
        <topology evidence="2">Peripheral membrane protein</topology>
        <orientation evidence="2">Extracellular side</orientation>
    </subcellularLocation>
    <subcellularLocation>
        <location evidence="2">Host Golgi apparatus</location>
        <location evidence="2">Host trans-Golgi network</location>
    </subcellularLocation>
    <text evidence="2">gL associates with the extravirion surface through its binding to gH. During virion morphogenesis, this protein probably accumulates in the host trans-Golgi where secondary envelopment occurs.</text>
</comment>
<comment type="similarity">
    <text evidence="2">Belongs to the herpesviridae glycoprotein L family.</text>
</comment>
<keyword id="KW-0002">3D-structure</keyword>
<keyword id="KW-1015">Disulfide bond</keyword>
<keyword id="KW-1169">Fusion of virus membrane with host cell membrane</keyword>
<keyword id="KW-1168">Fusion of virus membrane with host membrane</keyword>
<keyword id="KW-0325">Glycoprotein</keyword>
<keyword id="KW-1032">Host cell membrane</keyword>
<keyword id="KW-1040">Host Golgi apparatus</keyword>
<keyword id="KW-1043">Host membrane</keyword>
<keyword id="KW-0472">Membrane</keyword>
<keyword id="KW-0732">Signal</keyword>
<keyword id="KW-0261">Viral envelope protein</keyword>
<keyword id="KW-1162">Viral penetration into host cytoplasm</keyword>
<keyword id="KW-0946">Virion</keyword>
<keyword id="KW-1160">Virus entry into host cell</keyword>
<organismHost>
    <name type="scientific">Homo sapiens</name>
    <name type="common">Human</name>
    <dbReference type="NCBI Taxonomy" id="9606"/>
</organismHost>
<sequence>MRAVGVFLATCLVTIFVLPTWGNWAYPCCHVTQLRAQHLLALENISDIYLVSNQTCDGFSLASLNSPKNGSNQLVISRCANGLNVVSFFISILKRSSSALTSHLRELLTTLESLYGSFSVEDLFGANLNRYAWHRGG</sequence>
<accession>Q3KSS3</accession>
<feature type="signal peptide" evidence="2">
    <location>
        <begin position="1"/>
        <end position="25"/>
    </location>
</feature>
<feature type="chain" id="PRO_0000375948" description="Envelope glycoprotein L" evidence="2">
    <location>
        <begin position="26"/>
        <end position="137"/>
    </location>
</feature>
<feature type="region of interest" description="Interaction with gH" evidence="2">
    <location>
        <begin position="23"/>
        <end position="128"/>
    </location>
</feature>
<feature type="disulfide bond" evidence="1">
    <location>
        <begin position="28"/>
        <end position="56"/>
    </location>
</feature>
<feature type="disulfide bond" evidence="1">
    <location>
        <begin position="29"/>
        <end position="79"/>
    </location>
</feature>
<feature type="helix" evidence="3">
    <location>
        <begin position="42"/>
        <end position="44"/>
    </location>
</feature>
<feature type="strand" evidence="3">
    <location>
        <begin position="47"/>
        <end position="50"/>
    </location>
</feature>
<feature type="turn" evidence="3">
    <location>
        <begin position="53"/>
        <end position="57"/>
    </location>
</feature>
<feature type="strand" evidence="3">
    <location>
        <begin position="61"/>
        <end position="65"/>
    </location>
</feature>
<feature type="strand" evidence="3">
    <location>
        <begin position="77"/>
        <end position="81"/>
    </location>
</feature>
<feature type="helix" evidence="3">
    <location>
        <begin position="82"/>
        <end position="96"/>
    </location>
</feature>
<feature type="helix" evidence="3">
    <location>
        <begin position="97"/>
        <end position="99"/>
    </location>
</feature>
<feature type="helix" evidence="3">
    <location>
        <begin position="102"/>
        <end position="111"/>
    </location>
</feature>
<feature type="turn" evidence="3">
    <location>
        <begin position="112"/>
        <end position="114"/>
    </location>
</feature>
<feature type="helix" evidence="3">
    <location>
        <begin position="115"/>
        <end position="118"/>
    </location>
</feature>
<organism>
    <name type="scientific">Epstein-Barr virus (strain GD1)</name>
    <name type="common">HHV-4</name>
    <name type="synonym">Human gammaherpesvirus 4</name>
    <dbReference type="NCBI Taxonomy" id="10376"/>
    <lineage>
        <taxon>Viruses</taxon>
        <taxon>Duplodnaviria</taxon>
        <taxon>Heunggongvirae</taxon>
        <taxon>Peploviricota</taxon>
        <taxon>Herviviricetes</taxon>
        <taxon>Herpesvirales</taxon>
        <taxon>Orthoherpesviridae</taxon>
        <taxon>Gammaherpesvirinae</taxon>
        <taxon>Lymphocryptovirus</taxon>
        <taxon>Lymphocryptovirus humangamma4</taxon>
    </lineage>
</organism>
<proteinExistence type="evidence at protein level"/>
<reference key="1">
    <citation type="journal article" date="2005" name="J. Virol.">
        <title>Genomic sequence analysis of Epstein-Barr virus strain GD1 from a nasopharyngeal carcinoma patient.</title>
        <authorList>
            <person name="Zeng M.-S."/>
            <person name="Li D.-J."/>
            <person name="Liu Q.-L."/>
            <person name="Song L.-B."/>
            <person name="Li M.-Z."/>
            <person name="Zhang R.-H."/>
            <person name="Yu X.-J."/>
            <person name="Wang H.-M."/>
            <person name="Ernberg I."/>
            <person name="Zeng Y.-X."/>
        </authorList>
    </citation>
    <scope>NUCLEOTIDE SEQUENCE [LARGE SCALE GENOMIC DNA]</scope>
</reference>
<name>GL_EBVG</name>
<evidence type="ECO:0000250" key="1">
    <source>
        <dbReference type="UniProtKB" id="P03212"/>
    </source>
</evidence>
<evidence type="ECO:0000255" key="2">
    <source>
        <dbReference type="HAMAP-Rule" id="MF_04034"/>
    </source>
</evidence>
<evidence type="ECO:0007829" key="3">
    <source>
        <dbReference type="PDB" id="8KHR"/>
    </source>
</evidence>